<reference key="1">
    <citation type="journal article" date="2001" name="Proc. Natl. Acad. Sci. U.S.A.">
        <title>The complete genome of the crenarchaeon Sulfolobus solfataricus P2.</title>
        <authorList>
            <person name="She Q."/>
            <person name="Singh R.K."/>
            <person name="Confalonieri F."/>
            <person name="Zivanovic Y."/>
            <person name="Allard G."/>
            <person name="Awayez M.J."/>
            <person name="Chan-Weiher C.C.-Y."/>
            <person name="Clausen I.G."/>
            <person name="Curtis B.A."/>
            <person name="De Moors A."/>
            <person name="Erauso G."/>
            <person name="Fletcher C."/>
            <person name="Gordon P.M.K."/>
            <person name="Heikamp-de Jong I."/>
            <person name="Jeffries A.C."/>
            <person name="Kozera C.J."/>
            <person name="Medina N."/>
            <person name="Peng X."/>
            <person name="Thi-Ngoc H.P."/>
            <person name="Redder P."/>
            <person name="Schenk M.E."/>
            <person name="Theriault C."/>
            <person name="Tolstrup N."/>
            <person name="Charlebois R.L."/>
            <person name="Doolittle W.F."/>
            <person name="Duguet M."/>
            <person name="Gaasterland T."/>
            <person name="Garrett R.A."/>
            <person name="Ragan M.A."/>
            <person name="Sensen C.W."/>
            <person name="Van der Oost J."/>
        </authorList>
    </citation>
    <scope>NUCLEOTIDE SEQUENCE [LARGE SCALE GENOMIC DNA]</scope>
    <source>
        <strain>ATCC 35092 / DSM 1617 / JCM 11322 / P2</strain>
    </source>
</reference>
<reference key="2">
    <citation type="journal article" date="2012" name="Mol. Cell">
        <title>Structure and mechanism of the CMR complex for CRISPR-mediated antiviral immunity.</title>
        <authorList>
            <person name="Zhang J."/>
            <person name="Rouillon C."/>
            <person name="Kerou M."/>
            <person name="Reeks J."/>
            <person name="Brugger K."/>
            <person name="Graham S."/>
            <person name="Reimann J."/>
            <person name="Cannone G."/>
            <person name="Liu H."/>
            <person name="Albers S.V."/>
            <person name="Naismith J.H."/>
            <person name="Spagnolo L."/>
            <person name="White M.F."/>
        </authorList>
    </citation>
    <scope>IDENTIFICATION BY MASS SPECTROMETRY</scope>
    <scope>FUNCTION IN CMR COMPLEX</scope>
    <scope>SUBUNIT</scope>
    <scope>SUBCELLULAR LOCATION</scope>
    <source>
        <strain>ATCC 35092 / DSM 1617 / JCM 11322 / P2</strain>
    </source>
</reference>
<feature type="chain" id="PRO_0000418080" description="CRISPR system CMR subunit Cmr5">
    <location>
        <begin position="1"/>
        <end position="156"/>
    </location>
</feature>
<sequence length="156" mass="18145">MTEVQEEKDYKLAIEAFNLVYNALDKKAREKFRSRARDMVEEIYTSGFIPTLFYIISKAGLENNNDKLTALLNSPSSKSIDLGSSDEASYMAYLFVILYYLSERNIINKEFLINKLKNNRLELIDKLYELSPIISARIKRYLMAIKRLAEALIEVR</sequence>
<evidence type="ECO:0000250" key="1"/>
<evidence type="ECO:0000269" key="2">
    <source>
    </source>
</evidence>
<evidence type="ECO:0000305" key="3"/>
<organism>
    <name type="scientific">Saccharolobus solfataricus (strain ATCC 35092 / DSM 1617 / JCM 11322 / P2)</name>
    <name type="common">Sulfolobus solfataricus</name>
    <dbReference type="NCBI Taxonomy" id="273057"/>
    <lineage>
        <taxon>Archaea</taxon>
        <taxon>Thermoproteota</taxon>
        <taxon>Thermoprotei</taxon>
        <taxon>Sulfolobales</taxon>
        <taxon>Sulfolobaceae</taxon>
        <taxon>Saccharolobus</taxon>
    </lineage>
</organism>
<comment type="function">
    <text evidence="1 2">CRISPR (clustered regularly interspaced short palindromic repeat) is an adaptive immune system that provides protection against mobile genetic elements (viruses, transposable elements and conjugative plasmids). CRISPR clusters contain spacers, sequences complementary to antecedent mobile elements, and target invading nucleic acids. CRISPR clusters are transcribed and processed into CRISPR RNA (crRNA) (By similarity). The CMR complex degrades RNA complementary to the crRNA (target RNA) within UA dinucleotides, generating 3'-OH and 5'-phosphate ends. Activity is dependent on the 8 nt long 5' tag in the crRNA, an unpaired 3' flag on the target RNA, and is stimulated by ATP. Some cleavage of the guide crRNA can also be observed.</text>
</comment>
<comment type="subunit">
    <text evidence="2">Part of the CMR ribonucleoprotein complex, consisting of crRNA plus Cmr1/Cmr2/Cmr3/Cmr4/Cmr5/Cmr6 at 1:1 and possibly 3 Cmr7 dimers. A Cmr2/Cmr3/Cmr7 subcomplex without crRNA can also be isolated. It does not cleave target RNA.</text>
</comment>
<comment type="subcellular location">
    <subcellularLocation>
        <location evidence="2">Cytoplasm</location>
    </subcellularLocation>
</comment>
<comment type="similarity">
    <text evidence="3">Belongs to the CRISPR system Cmr5 family.</text>
</comment>
<protein>
    <recommendedName>
        <fullName>CRISPR system CMR subunit Cmr5</fullName>
    </recommendedName>
    <alternativeName>
        <fullName>CRISPR type III-B/RAMP module-associated protein Cmr5</fullName>
    </alternativeName>
</protein>
<dbReference type="EMBL" id="AE006641">
    <property type="protein sequence ID" value="AAK42178.1"/>
    <property type="molecule type" value="Genomic_DNA"/>
</dbReference>
<dbReference type="PIR" id="C90365">
    <property type="entry name" value="C90365"/>
</dbReference>
<dbReference type="RefSeq" id="WP_009992995.1">
    <property type="nucleotide sequence ID" value="NC_002754.1"/>
</dbReference>
<dbReference type="SMR" id="Q97WX3"/>
<dbReference type="STRING" id="273057.SSO1988"/>
<dbReference type="PaxDb" id="273057-SSO1988"/>
<dbReference type="EnsemblBacteria" id="AAK42178">
    <property type="protein sequence ID" value="AAK42178"/>
    <property type="gene ID" value="SSO1988"/>
</dbReference>
<dbReference type="GeneID" id="27428314"/>
<dbReference type="KEGG" id="sso:SSO1988"/>
<dbReference type="PATRIC" id="fig|273057.12.peg.2064"/>
<dbReference type="eggNOG" id="arCOG02654">
    <property type="taxonomic scope" value="Archaea"/>
</dbReference>
<dbReference type="HOGENOM" id="CLU_1691615_0_0_2"/>
<dbReference type="InParanoid" id="Q97WX3"/>
<dbReference type="Proteomes" id="UP000001974">
    <property type="component" value="Chromosome"/>
</dbReference>
<dbReference type="GO" id="GO:0005737">
    <property type="term" value="C:cytoplasm"/>
    <property type="evidence" value="ECO:0007669"/>
    <property type="project" value="UniProtKB-SubCell"/>
</dbReference>
<dbReference type="GO" id="GO:0051607">
    <property type="term" value="P:defense response to virus"/>
    <property type="evidence" value="ECO:0007669"/>
    <property type="project" value="UniProtKB-KW"/>
</dbReference>
<dbReference type="CDD" id="cd09654">
    <property type="entry name" value="Cmr5_III-B"/>
    <property type="match status" value="1"/>
</dbReference>
<dbReference type="Gene3D" id="1.10.520.30">
    <property type="entry name" value="AF1862-like domain"/>
    <property type="match status" value="1"/>
</dbReference>
<dbReference type="InterPro" id="IPR023101">
    <property type="entry name" value="AF1862-like_dom_sf"/>
</dbReference>
<dbReference type="InterPro" id="IPR010160">
    <property type="entry name" value="CRISPR-assoc_prot_Cmr5"/>
</dbReference>
<dbReference type="NCBIfam" id="TIGR01881">
    <property type="entry name" value="cas_Cmr5"/>
    <property type="match status" value="1"/>
</dbReference>
<dbReference type="SUPFAM" id="SSF158568">
    <property type="entry name" value="AF1862-like"/>
    <property type="match status" value="1"/>
</dbReference>
<proteinExistence type="evidence at protein level"/>
<accession>Q97WX3</accession>
<keyword id="KW-0051">Antiviral defense</keyword>
<keyword id="KW-0963">Cytoplasm</keyword>
<keyword id="KW-1185">Reference proteome</keyword>
<gene>
    <name type="primary">cmr5</name>
    <name type="ordered locus">SSO1988</name>
</gene>
<name>CMR5_SACS2</name>